<sequence length="118" mass="13125">NLIQFSNMIQCANKGSRPSLDYADYGCYCGWGGSGTPVDELDRCCKVHDDCYAEAGKKGCYPKLTLYSWDCTGNVPICNPKTECKDFTCACDAEAAKCFAKAPYKKENWNIDTKTRCK</sequence>
<protein>
    <recommendedName>
        <fullName>Basic phospholipase A2 PA-5</fullName>
        <shortName>svPLA2</shortName>
        <ecNumber>3.1.1.4</ecNumber>
    </recommendedName>
    <alternativeName>
        <fullName>Phosphatidylcholine 2-acylhydrolase</fullName>
    </alternativeName>
</protein>
<proteinExistence type="evidence at protein level"/>
<reference key="1">
    <citation type="journal article" date="1990" name="Toxicon">
        <title>Amino acid sequences of eight phospholipases A2 from the venom of Australian king brown snake, Pseudechis australis.</title>
        <authorList>
            <person name="Takasaki C."/>
            <person name="Yutani F."/>
            <person name="Kajiyashiki T."/>
        </authorList>
    </citation>
    <scope>PROTEIN SEQUENCE</scope>
    <scope>TOXIC DOSE</scope>
    <source>
        <tissue>Venom</tissue>
    </source>
</reference>
<dbReference type="EC" id="3.1.1.4"/>
<dbReference type="PIR" id="C34860">
    <property type="entry name" value="C34860"/>
</dbReference>
<dbReference type="SMR" id="P20252"/>
<dbReference type="GO" id="GO:0005576">
    <property type="term" value="C:extracellular region"/>
    <property type="evidence" value="ECO:0007669"/>
    <property type="project" value="UniProtKB-SubCell"/>
</dbReference>
<dbReference type="GO" id="GO:0005509">
    <property type="term" value="F:calcium ion binding"/>
    <property type="evidence" value="ECO:0007669"/>
    <property type="project" value="InterPro"/>
</dbReference>
<dbReference type="GO" id="GO:0047498">
    <property type="term" value="F:calcium-dependent phospholipase A2 activity"/>
    <property type="evidence" value="ECO:0007669"/>
    <property type="project" value="TreeGrafter"/>
</dbReference>
<dbReference type="GO" id="GO:0005543">
    <property type="term" value="F:phospholipid binding"/>
    <property type="evidence" value="ECO:0007669"/>
    <property type="project" value="TreeGrafter"/>
</dbReference>
<dbReference type="GO" id="GO:0050482">
    <property type="term" value="P:arachidonate secretion"/>
    <property type="evidence" value="ECO:0007669"/>
    <property type="project" value="InterPro"/>
</dbReference>
<dbReference type="GO" id="GO:0016042">
    <property type="term" value="P:lipid catabolic process"/>
    <property type="evidence" value="ECO:0007669"/>
    <property type="project" value="UniProtKB-KW"/>
</dbReference>
<dbReference type="GO" id="GO:0006644">
    <property type="term" value="P:phospholipid metabolic process"/>
    <property type="evidence" value="ECO:0007669"/>
    <property type="project" value="InterPro"/>
</dbReference>
<dbReference type="CDD" id="cd00125">
    <property type="entry name" value="PLA2c"/>
    <property type="match status" value="1"/>
</dbReference>
<dbReference type="FunFam" id="1.20.90.10:FF:000007">
    <property type="entry name" value="Acidic phospholipase A2"/>
    <property type="match status" value="1"/>
</dbReference>
<dbReference type="Gene3D" id="1.20.90.10">
    <property type="entry name" value="Phospholipase A2 domain"/>
    <property type="match status" value="1"/>
</dbReference>
<dbReference type="InterPro" id="IPR001211">
    <property type="entry name" value="PLipase_A2"/>
</dbReference>
<dbReference type="InterPro" id="IPR016090">
    <property type="entry name" value="PLipase_A2_dom"/>
</dbReference>
<dbReference type="InterPro" id="IPR036444">
    <property type="entry name" value="PLipase_A2_dom_sf"/>
</dbReference>
<dbReference type="InterPro" id="IPR033113">
    <property type="entry name" value="PLipase_A2_His_AS"/>
</dbReference>
<dbReference type="PANTHER" id="PTHR11716:SF51">
    <property type="entry name" value="PHOSPHOLIPASE A2"/>
    <property type="match status" value="1"/>
</dbReference>
<dbReference type="PANTHER" id="PTHR11716">
    <property type="entry name" value="PHOSPHOLIPASE A2 FAMILY MEMBER"/>
    <property type="match status" value="1"/>
</dbReference>
<dbReference type="Pfam" id="PF00068">
    <property type="entry name" value="Phospholip_A2_1"/>
    <property type="match status" value="1"/>
</dbReference>
<dbReference type="PRINTS" id="PR00389">
    <property type="entry name" value="PHPHLIPASEA2"/>
</dbReference>
<dbReference type="SMART" id="SM00085">
    <property type="entry name" value="PA2c"/>
    <property type="match status" value="1"/>
</dbReference>
<dbReference type="SUPFAM" id="SSF48619">
    <property type="entry name" value="Phospholipase A2, PLA2"/>
    <property type="match status" value="1"/>
</dbReference>
<dbReference type="PROSITE" id="PS00118">
    <property type="entry name" value="PA2_HIS"/>
    <property type="match status" value="1"/>
</dbReference>
<keyword id="KW-0106">Calcium</keyword>
<keyword id="KW-0903">Direct protein sequencing</keyword>
<keyword id="KW-1015">Disulfide bond</keyword>
<keyword id="KW-0378">Hydrolase</keyword>
<keyword id="KW-0442">Lipid degradation</keyword>
<keyword id="KW-0443">Lipid metabolism</keyword>
<keyword id="KW-0479">Metal-binding</keyword>
<keyword id="KW-0964">Secreted</keyword>
<evidence type="ECO:0000250" key="1"/>
<evidence type="ECO:0000255" key="2">
    <source>
        <dbReference type="PROSITE-ProRule" id="PRU10035"/>
    </source>
</evidence>
<evidence type="ECO:0000269" key="3">
    <source>
    </source>
</evidence>
<evidence type="ECO:0000305" key="4"/>
<feature type="chain" id="PRO_0000161683" description="Basic phospholipase A2 PA-5">
    <location>
        <begin position="1"/>
        <end position="118"/>
    </location>
</feature>
<feature type="active site" evidence="2">
    <location>
        <position position="48"/>
    </location>
</feature>
<feature type="active site" evidence="2">
    <location>
        <position position="92"/>
    </location>
</feature>
<feature type="binding site" evidence="1">
    <location>
        <position position="28"/>
    </location>
    <ligand>
        <name>Ca(2+)</name>
        <dbReference type="ChEBI" id="CHEBI:29108"/>
    </ligand>
</feature>
<feature type="binding site" evidence="1">
    <location>
        <position position="30"/>
    </location>
    <ligand>
        <name>Ca(2+)</name>
        <dbReference type="ChEBI" id="CHEBI:29108"/>
    </ligand>
</feature>
<feature type="binding site" evidence="1">
    <location>
        <position position="32"/>
    </location>
    <ligand>
        <name>Ca(2+)</name>
        <dbReference type="ChEBI" id="CHEBI:29108"/>
    </ligand>
</feature>
<feature type="binding site" evidence="1">
    <location>
        <position position="49"/>
    </location>
    <ligand>
        <name>Ca(2+)</name>
        <dbReference type="ChEBI" id="CHEBI:29108"/>
    </ligand>
</feature>
<feature type="disulfide bond" evidence="1">
    <location>
        <begin position="11"/>
        <end position="71"/>
    </location>
</feature>
<feature type="disulfide bond" evidence="1">
    <location>
        <begin position="27"/>
        <end position="117"/>
    </location>
</feature>
<feature type="disulfide bond" evidence="1">
    <location>
        <begin position="29"/>
        <end position="45"/>
    </location>
</feature>
<feature type="disulfide bond" evidence="1">
    <location>
        <begin position="44"/>
        <end position="98"/>
    </location>
</feature>
<feature type="disulfide bond" evidence="1">
    <location>
        <begin position="51"/>
        <end position="91"/>
    </location>
</feature>
<feature type="disulfide bond" evidence="1">
    <location>
        <begin position="60"/>
        <end position="84"/>
    </location>
</feature>
<feature type="disulfide bond" evidence="1">
    <location>
        <begin position="78"/>
        <end position="89"/>
    </location>
</feature>
<feature type="sequence variant">
    <original>P</original>
    <variation>S</variation>
    <location>
        <position position="18"/>
    </location>
</feature>
<feature type="sequence variant">
    <original>Y</original>
    <variation>F</variation>
    <location>
        <position position="61"/>
    </location>
</feature>
<comment type="function">
    <text>PLA2 catalyzes the calcium-dependent hydrolysis of the 2-acyl groups in 3-sn-phosphoglycerides.</text>
</comment>
<comment type="catalytic activity">
    <reaction evidence="2">
        <text>a 1,2-diacyl-sn-glycero-3-phosphocholine + H2O = a 1-acyl-sn-glycero-3-phosphocholine + a fatty acid + H(+)</text>
        <dbReference type="Rhea" id="RHEA:15801"/>
        <dbReference type="ChEBI" id="CHEBI:15377"/>
        <dbReference type="ChEBI" id="CHEBI:15378"/>
        <dbReference type="ChEBI" id="CHEBI:28868"/>
        <dbReference type="ChEBI" id="CHEBI:57643"/>
        <dbReference type="ChEBI" id="CHEBI:58168"/>
        <dbReference type="EC" id="3.1.1.4"/>
    </reaction>
</comment>
<comment type="cofactor">
    <cofactor evidence="1">
        <name>Ca(2+)</name>
        <dbReference type="ChEBI" id="CHEBI:29108"/>
    </cofactor>
    <text evidence="1">Binds 1 Ca(2+) ion.</text>
</comment>
<comment type="subcellular location">
    <subcellularLocation>
        <location>Secreted</location>
    </subcellularLocation>
</comment>
<comment type="tissue specificity">
    <text>Expressed by the venom gland.</text>
</comment>
<comment type="toxic dose">
    <text evidence="3">LD(50) is 0.09 mg/kg by intravenous injection.</text>
</comment>
<comment type="similarity">
    <text evidence="4">Belongs to the phospholipase A2 family. Group I subfamily. D49 sub-subfamily.</text>
</comment>
<organism>
    <name type="scientific">Pseudechis australis</name>
    <name type="common">Mulga snake</name>
    <name type="synonym">King brown snake</name>
    <dbReference type="NCBI Taxonomy" id="8670"/>
    <lineage>
        <taxon>Eukaryota</taxon>
        <taxon>Metazoa</taxon>
        <taxon>Chordata</taxon>
        <taxon>Craniata</taxon>
        <taxon>Vertebrata</taxon>
        <taxon>Euteleostomi</taxon>
        <taxon>Lepidosauria</taxon>
        <taxon>Squamata</taxon>
        <taxon>Bifurcata</taxon>
        <taxon>Unidentata</taxon>
        <taxon>Episquamata</taxon>
        <taxon>Toxicofera</taxon>
        <taxon>Serpentes</taxon>
        <taxon>Colubroidea</taxon>
        <taxon>Elapidae</taxon>
        <taxon>Hydrophiinae</taxon>
        <taxon>Pseudechis</taxon>
    </lineage>
</organism>
<name>PA2B_PSEAU</name>
<accession>P20252</accession>